<reference key="1">
    <citation type="journal article" date="2000" name="Nature">
        <title>The genome sequence of the food-borne pathogen Campylobacter jejuni reveals hypervariable sequences.</title>
        <authorList>
            <person name="Parkhill J."/>
            <person name="Wren B.W."/>
            <person name="Mungall K.L."/>
            <person name="Ketley J.M."/>
            <person name="Churcher C.M."/>
            <person name="Basham D."/>
            <person name="Chillingworth T."/>
            <person name="Davies R.M."/>
            <person name="Feltwell T."/>
            <person name="Holroyd S."/>
            <person name="Jagels K."/>
            <person name="Karlyshev A.V."/>
            <person name="Moule S."/>
            <person name="Pallen M.J."/>
            <person name="Penn C.W."/>
            <person name="Quail M.A."/>
            <person name="Rajandream M.A."/>
            <person name="Rutherford K.M."/>
            <person name="van Vliet A.H.M."/>
            <person name="Whitehead S."/>
            <person name="Barrell B.G."/>
        </authorList>
    </citation>
    <scope>NUCLEOTIDE SEQUENCE [LARGE SCALE GENOMIC DNA]</scope>
    <source>
        <strain>ATCC 700819 / NCTC 11168</strain>
    </source>
</reference>
<comment type="function">
    <text evidence="1">Catalyzes the conversion of uracil and 5-phospho-alpha-D-ribose 1-diphosphate (PRPP) to UMP and diphosphate.</text>
</comment>
<comment type="catalytic activity">
    <reaction evidence="1">
        <text>UMP + diphosphate = 5-phospho-alpha-D-ribose 1-diphosphate + uracil</text>
        <dbReference type="Rhea" id="RHEA:13017"/>
        <dbReference type="ChEBI" id="CHEBI:17568"/>
        <dbReference type="ChEBI" id="CHEBI:33019"/>
        <dbReference type="ChEBI" id="CHEBI:57865"/>
        <dbReference type="ChEBI" id="CHEBI:58017"/>
        <dbReference type="EC" id="2.4.2.9"/>
    </reaction>
</comment>
<comment type="cofactor">
    <cofactor evidence="1">
        <name>Mg(2+)</name>
        <dbReference type="ChEBI" id="CHEBI:18420"/>
    </cofactor>
    <text evidence="1">Binds 1 Mg(2+) ion per subunit. The magnesium is bound as Mg-PRPP.</text>
</comment>
<comment type="activity regulation">
    <text evidence="1">Allosterically activated by GTP.</text>
</comment>
<comment type="pathway">
    <text evidence="1">Pyrimidine metabolism; UMP biosynthesis via salvage pathway; UMP from uracil: step 1/1.</text>
</comment>
<comment type="similarity">
    <text evidence="1">Belongs to the UPRTase family.</text>
</comment>
<organism>
    <name type="scientific">Campylobacter jejuni subsp. jejuni serotype O:2 (strain ATCC 700819 / NCTC 11168)</name>
    <dbReference type="NCBI Taxonomy" id="192222"/>
    <lineage>
        <taxon>Bacteria</taxon>
        <taxon>Pseudomonadati</taxon>
        <taxon>Campylobacterota</taxon>
        <taxon>Epsilonproteobacteria</taxon>
        <taxon>Campylobacterales</taxon>
        <taxon>Campylobacteraceae</taxon>
        <taxon>Campylobacter</taxon>
    </lineage>
</organism>
<dbReference type="EC" id="2.4.2.9" evidence="1"/>
<dbReference type="EMBL" id="AL111168">
    <property type="protein sequence ID" value="CAL35400.1"/>
    <property type="molecule type" value="Genomic_DNA"/>
</dbReference>
<dbReference type="PIR" id="G81336">
    <property type="entry name" value="G81336"/>
</dbReference>
<dbReference type="RefSeq" id="WP_002858427.1">
    <property type="nucleotide sequence ID" value="NZ_SZUC01000001.1"/>
</dbReference>
<dbReference type="RefSeq" id="YP_002344676.1">
    <property type="nucleotide sequence ID" value="NC_002163.1"/>
</dbReference>
<dbReference type="SMR" id="Q9PN13"/>
<dbReference type="STRING" id="192222.Cj1286c"/>
<dbReference type="PaxDb" id="192222-Cj1286c"/>
<dbReference type="EnsemblBacteria" id="CAL35400">
    <property type="protein sequence ID" value="CAL35400"/>
    <property type="gene ID" value="Cj1286c"/>
</dbReference>
<dbReference type="GeneID" id="905578"/>
<dbReference type="KEGG" id="cje:Cj1286c"/>
<dbReference type="PATRIC" id="fig|192222.6.peg.1268"/>
<dbReference type="eggNOG" id="COG0035">
    <property type="taxonomic scope" value="Bacteria"/>
</dbReference>
<dbReference type="HOGENOM" id="CLU_067096_2_2_7"/>
<dbReference type="OrthoDB" id="9781675at2"/>
<dbReference type="UniPathway" id="UPA00574">
    <property type="reaction ID" value="UER00636"/>
</dbReference>
<dbReference type="Proteomes" id="UP000000799">
    <property type="component" value="Chromosome"/>
</dbReference>
<dbReference type="GO" id="GO:0005525">
    <property type="term" value="F:GTP binding"/>
    <property type="evidence" value="ECO:0007669"/>
    <property type="project" value="UniProtKB-KW"/>
</dbReference>
<dbReference type="GO" id="GO:0000287">
    <property type="term" value="F:magnesium ion binding"/>
    <property type="evidence" value="ECO:0007669"/>
    <property type="project" value="UniProtKB-UniRule"/>
</dbReference>
<dbReference type="GO" id="GO:0004845">
    <property type="term" value="F:uracil phosphoribosyltransferase activity"/>
    <property type="evidence" value="ECO:0007669"/>
    <property type="project" value="UniProtKB-UniRule"/>
</dbReference>
<dbReference type="GO" id="GO:0044206">
    <property type="term" value="P:UMP salvage"/>
    <property type="evidence" value="ECO:0007669"/>
    <property type="project" value="UniProtKB-UniRule"/>
</dbReference>
<dbReference type="GO" id="GO:0006223">
    <property type="term" value="P:uracil salvage"/>
    <property type="evidence" value="ECO:0007669"/>
    <property type="project" value="InterPro"/>
</dbReference>
<dbReference type="CDD" id="cd06223">
    <property type="entry name" value="PRTases_typeI"/>
    <property type="match status" value="1"/>
</dbReference>
<dbReference type="FunFam" id="3.40.50.2020:FF:000003">
    <property type="entry name" value="Uracil phosphoribosyltransferase"/>
    <property type="match status" value="1"/>
</dbReference>
<dbReference type="Gene3D" id="3.40.50.2020">
    <property type="match status" value="1"/>
</dbReference>
<dbReference type="HAMAP" id="MF_01218_B">
    <property type="entry name" value="Upp_B"/>
    <property type="match status" value="1"/>
</dbReference>
<dbReference type="InterPro" id="IPR000836">
    <property type="entry name" value="PRibTrfase_dom"/>
</dbReference>
<dbReference type="InterPro" id="IPR029057">
    <property type="entry name" value="PRTase-like"/>
</dbReference>
<dbReference type="InterPro" id="IPR034332">
    <property type="entry name" value="Upp_B"/>
</dbReference>
<dbReference type="InterPro" id="IPR050054">
    <property type="entry name" value="UPRTase/APRTase"/>
</dbReference>
<dbReference type="InterPro" id="IPR005765">
    <property type="entry name" value="Ura_phspho_trans"/>
</dbReference>
<dbReference type="NCBIfam" id="NF001097">
    <property type="entry name" value="PRK00129.1"/>
    <property type="match status" value="1"/>
</dbReference>
<dbReference type="NCBIfam" id="TIGR01091">
    <property type="entry name" value="upp"/>
    <property type="match status" value="1"/>
</dbReference>
<dbReference type="PANTHER" id="PTHR32315">
    <property type="entry name" value="ADENINE PHOSPHORIBOSYLTRANSFERASE"/>
    <property type="match status" value="1"/>
</dbReference>
<dbReference type="PANTHER" id="PTHR32315:SF4">
    <property type="entry name" value="URACIL PHOSPHORIBOSYLTRANSFERASE, CHLOROPLASTIC"/>
    <property type="match status" value="1"/>
</dbReference>
<dbReference type="Pfam" id="PF14681">
    <property type="entry name" value="UPRTase"/>
    <property type="match status" value="1"/>
</dbReference>
<dbReference type="SUPFAM" id="SSF53271">
    <property type="entry name" value="PRTase-like"/>
    <property type="match status" value="1"/>
</dbReference>
<accession>Q9PN13</accession>
<accession>Q0P8X1</accession>
<gene>
    <name evidence="1" type="primary">upp</name>
    <name type="ordered locus">Cj1286c</name>
</gene>
<proteinExistence type="inferred from homology"/>
<name>UPP_CAMJE</name>
<feature type="chain" id="PRO_0000120810" description="Uracil phosphoribosyltransferase">
    <location>
        <begin position="1"/>
        <end position="208"/>
    </location>
</feature>
<feature type="binding site" evidence="1">
    <location>
        <position position="78"/>
    </location>
    <ligand>
        <name>5-phospho-alpha-D-ribose 1-diphosphate</name>
        <dbReference type="ChEBI" id="CHEBI:58017"/>
    </ligand>
</feature>
<feature type="binding site" evidence="1">
    <location>
        <position position="103"/>
    </location>
    <ligand>
        <name>5-phospho-alpha-D-ribose 1-diphosphate</name>
        <dbReference type="ChEBI" id="CHEBI:58017"/>
    </ligand>
</feature>
<feature type="binding site" evidence="1">
    <location>
        <begin position="130"/>
        <end position="138"/>
    </location>
    <ligand>
        <name>5-phospho-alpha-D-ribose 1-diphosphate</name>
        <dbReference type="ChEBI" id="CHEBI:58017"/>
    </ligand>
</feature>
<feature type="binding site" evidence="1">
    <location>
        <position position="193"/>
    </location>
    <ligand>
        <name>uracil</name>
        <dbReference type="ChEBI" id="CHEBI:17568"/>
    </ligand>
</feature>
<feature type="binding site" evidence="1">
    <location>
        <begin position="198"/>
        <end position="200"/>
    </location>
    <ligand>
        <name>uracil</name>
        <dbReference type="ChEBI" id="CHEBI:17568"/>
    </ligand>
</feature>
<feature type="binding site" evidence="1">
    <location>
        <position position="199"/>
    </location>
    <ligand>
        <name>5-phospho-alpha-D-ribose 1-diphosphate</name>
        <dbReference type="ChEBI" id="CHEBI:58017"/>
    </ligand>
</feature>
<evidence type="ECO:0000255" key="1">
    <source>
        <dbReference type="HAMAP-Rule" id="MF_01218"/>
    </source>
</evidence>
<sequence length="208" mass="23299">MKNIHCINHPLIEHKLGILRAKETKPFQFRMLIDEISSFLLFEASKDFSLKEIEISTPIQKTTVKKLDEKIMICPILRAALGMLESVFKMIPDASVGFLGFVRNEETLKADFYFQKLPKDAKKRTAIVIDPMFATGGTAIDACNFLKSQGVKKIKFISILAAPQGLKKFSQMHDDVEVFVACIDEGLNEKGYIIPGLGDAGDRVFNTL</sequence>
<keyword id="KW-0021">Allosteric enzyme</keyword>
<keyword id="KW-0328">Glycosyltransferase</keyword>
<keyword id="KW-0342">GTP-binding</keyword>
<keyword id="KW-0460">Magnesium</keyword>
<keyword id="KW-0547">Nucleotide-binding</keyword>
<keyword id="KW-1185">Reference proteome</keyword>
<keyword id="KW-0808">Transferase</keyword>
<protein>
    <recommendedName>
        <fullName evidence="1">Uracil phosphoribosyltransferase</fullName>
        <ecNumber evidence="1">2.4.2.9</ecNumber>
    </recommendedName>
    <alternativeName>
        <fullName evidence="1">UMP pyrophosphorylase</fullName>
    </alternativeName>
    <alternativeName>
        <fullName evidence="1">UPRTase</fullName>
    </alternativeName>
</protein>